<name>BIOF_SERP5</name>
<organism>
    <name type="scientific">Serratia proteamaculans (strain 568)</name>
    <dbReference type="NCBI Taxonomy" id="399741"/>
    <lineage>
        <taxon>Bacteria</taxon>
        <taxon>Pseudomonadati</taxon>
        <taxon>Pseudomonadota</taxon>
        <taxon>Gammaproteobacteria</taxon>
        <taxon>Enterobacterales</taxon>
        <taxon>Yersiniaceae</taxon>
        <taxon>Serratia</taxon>
    </lineage>
</organism>
<feature type="chain" id="PRO_0000381107" description="8-amino-7-oxononanoate synthase">
    <location>
        <begin position="1"/>
        <end position="383"/>
    </location>
</feature>
<feature type="binding site" evidence="1">
    <location>
        <position position="21"/>
    </location>
    <ligand>
        <name>substrate</name>
    </ligand>
</feature>
<feature type="binding site" evidence="1">
    <location>
        <begin position="108"/>
        <end position="109"/>
    </location>
    <ligand>
        <name>pyridoxal 5'-phosphate</name>
        <dbReference type="ChEBI" id="CHEBI:597326"/>
    </ligand>
</feature>
<feature type="binding site" evidence="1">
    <location>
        <position position="133"/>
    </location>
    <ligand>
        <name>substrate</name>
    </ligand>
</feature>
<feature type="binding site" evidence="1">
    <location>
        <position position="179"/>
    </location>
    <ligand>
        <name>pyridoxal 5'-phosphate</name>
        <dbReference type="ChEBI" id="CHEBI:597326"/>
    </ligand>
</feature>
<feature type="binding site" evidence="1">
    <location>
        <position position="207"/>
    </location>
    <ligand>
        <name>pyridoxal 5'-phosphate</name>
        <dbReference type="ChEBI" id="CHEBI:597326"/>
    </ligand>
</feature>
<feature type="binding site" evidence="1">
    <location>
        <position position="233"/>
    </location>
    <ligand>
        <name>pyridoxal 5'-phosphate</name>
        <dbReference type="ChEBI" id="CHEBI:597326"/>
    </ligand>
</feature>
<feature type="binding site" evidence="1">
    <location>
        <position position="350"/>
    </location>
    <ligand>
        <name>substrate</name>
    </ligand>
</feature>
<feature type="modified residue" description="N6-(pyridoxal phosphate)lysine" evidence="1">
    <location>
        <position position="236"/>
    </location>
</feature>
<sequence length="383" mass="41674">MSWQQRIEQALEERQQSAAYRRRQVNQGGNGRYIQLNGEHYLNFSGNDYLGLSQNAQVIAAWQQGAQQYGVGSGGSGHVTGFSTAHQVLEQQLADWLGYPRALLFISGYAANQALLAALMQAEDRILADRLSHASLLEAAAHSPAQLRRFRHNQPQALADLLAKPCDGQILAVTEGVFSMDGDSAPLAELHRLTRAAGAWLMVDDAHGIGVHGEQGRGSCWQQGVRPELLVVTFGKAFGLSGAAVLCDEPTAEYLLQFARHLIYSTAMPPAQASALQAALHCIRQGDELRARLQDNIQRFRQGAAQLSLTLTESVTAIQPLLVGDNQRALDLAQSLREQGLWVSAIRPPTVPPGGARLRITLTAAHQPQDIDRLLEVLHDVSV</sequence>
<gene>
    <name evidence="1" type="primary">bioF</name>
    <name type="ordered locus">Spro_1312</name>
</gene>
<evidence type="ECO:0000255" key="1">
    <source>
        <dbReference type="HAMAP-Rule" id="MF_01693"/>
    </source>
</evidence>
<accession>A8GBC6</accession>
<keyword id="KW-0093">Biotin biosynthesis</keyword>
<keyword id="KW-0663">Pyridoxal phosphate</keyword>
<keyword id="KW-0808">Transferase</keyword>
<reference key="1">
    <citation type="submission" date="2007-09" db="EMBL/GenBank/DDBJ databases">
        <title>Complete sequence of chromosome of Serratia proteamaculans 568.</title>
        <authorList>
            <consortium name="US DOE Joint Genome Institute"/>
            <person name="Copeland A."/>
            <person name="Lucas S."/>
            <person name="Lapidus A."/>
            <person name="Barry K."/>
            <person name="Glavina del Rio T."/>
            <person name="Dalin E."/>
            <person name="Tice H."/>
            <person name="Pitluck S."/>
            <person name="Chain P."/>
            <person name="Malfatti S."/>
            <person name="Shin M."/>
            <person name="Vergez L."/>
            <person name="Schmutz J."/>
            <person name="Larimer F."/>
            <person name="Land M."/>
            <person name="Hauser L."/>
            <person name="Kyrpides N."/>
            <person name="Kim E."/>
            <person name="Taghavi S."/>
            <person name="Newman L."/>
            <person name="Vangronsveld J."/>
            <person name="van der Lelie D."/>
            <person name="Richardson P."/>
        </authorList>
    </citation>
    <scope>NUCLEOTIDE SEQUENCE [LARGE SCALE GENOMIC DNA]</scope>
    <source>
        <strain>568</strain>
    </source>
</reference>
<protein>
    <recommendedName>
        <fullName evidence="1">8-amino-7-oxononanoate synthase</fullName>
        <shortName evidence="1">AONS</shortName>
        <ecNumber evidence="1">2.3.1.47</ecNumber>
    </recommendedName>
    <alternativeName>
        <fullName evidence="1">7-keto-8-amino-pelargonic acid synthase</fullName>
        <shortName evidence="1">7-KAP synthase</shortName>
        <shortName evidence="1">KAPA synthase</shortName>
    </alternativeName>
    <alternativeName>
        <fullName evidence="1">8-amino-7-ketopelargonate synthase</fullName>
    </alternativeName>
</protein>
<proteinExistence type="inferred from homology"/>
<comment type="function">
    <text evidence="1">Catalyzes the decarboxylative condensation of pimeloyl-[acyl-carrier protein] and L-alanine to produce 8-amino-7-oxononanoate (AON), [acyl-carrier protein], and carbon dioxide.</text>
</comment>
<comment type="catalytic activity">
    <reaction evidence="1">
        <text>6-carboxyhexanoyl-[ACP] + L-alanine + H(+) = (8S)-8-amino-7-oxononanoate + holo-[ACP] + CO2</text>
        <dbReference type="Rhea" id="RHEA:42288"/>
        <dbReference type="Rhea" id="RHEA-COMP:9685"/>
        <dbReference type="Rhea" id="RHEA-COMP:9955"/>
        <dbReference type="ChEBI" id="CHEBI:15378"/>
        <dbReference type="ChEBI" id="CHEBI:16526"/>
        <dbReference type="ChEBI" id="CHEBI:57972"/>
        <dbReference type="ChEBI" id="CHEBI:64479"/>
        <dbReference type="ChEBI" id="CHEBI:78846"/>
        <dbReference type="ChEBI" id="CHEBI:149468"/>
        <dbReference type="EC" id="2.3.1.47"/>
    </reaction>
</comment>
<comment type="cofactor">
    <cofactor evidence="1">
        <name>pyridoxal 5'-phosphate</name>
        <dbReference type="ChEBI" id="CHEBI:597326"/>
    </cofactor>
</comment>
<comment type="pathway">
    <text evidence="1">Cofactor biosynthesis; biotin biosynthesis.</text>
</comment>
<comment type="subunit">
    <text evidence="1">Homodimer.</text>
</comment>
<comment type="similarity">
    <text evidence="1">Belongs to the class-II pyridoxal-phosphate-dependent aminotransferase family. BioF subfamily.</text>
</comment>
<dbReference type="EC" id="2.3.1.47" evidence="1"/>
<dbReference type="EMBL" id="CP000826">
    <property type="protein sequence ID" value="ABV40416.1"/>
    <property type="molecule type" value="Genomic_DNA"/>
</dbReference>
<dbReference type="SMR" id="A8GBC6"/>
<dbReference type="STRING" id="399741.Spro_1312"/>
<dbReference type="KEGG" id="spe:Spro_1312"/>
<dbReference type="eggNOG" id="COG0156">
    <property type="taxonomic scope" value="Bacteria"/>
</dbReference>
<dbReference type="HOGENOM" id="CLU_015846_11_2_6"/>
<dbReference type="OrthoDB" id="9807157at2"/>
<dbReference type="UniPathway" id="UPA00078"/>
<dbReference type="GO" id="GO:0008710">
    <property type="term" value="F:8-amino-7-oxononanoate synthase activity"/>
    <property type="evidence" value="ECO:0007669"/>
    <property type="project" value="UniProtKB-UniRule"/>
</dbReference>
<dbReference type="GO" id="GO:0030170">
    <property type="term" value="F:pyridoxal phosphate binding"/>
    <property type="evidence" value="ECO:0007669"/>
    <property type="project" value="UniProtKB-UniRule"/>
</dbReference>
<dbReference type="GO" id="GO:0009102">
    <property type="term" value="P:biotin biosynthetic process"/>
    <property type="evidence" value="ECO:0007669"/>
    <property type="project" value="UniProtKB-UniRule"/>
</dbReference>
<dbReference type="Gene3D" id="3.90.1150.10">
    <property type="entry name" value="Aspartate Aminotransferase, domain 1"/>
    <property type="match status" value="1"/>
</dbReference>
<dbReference type="Gene3D" id="3.40.640.10">
    <property type="entry name" value="Type I PLP-dependent aspartate aminotransferase-like (Major domain)"/>
    <property type="match status" value="1"/>
</dbReference>
<dbReference type="HAMAP" id="MF_01693">
    <property type="entry name" value="BioF_aminotrans_2"/>
    <property type="match status" value="1"/>
</dbReference>
<dbReference type="InterPro" id="IPR001917">
    <property type="entry name" value="Aminotrans_II_pyridoxalP_BS"/>
</dbReference>
<dbReference type="InterPro" id="IPR004839">
    <property type="entry name" value="Aminotransferase_I/II_large"/>
</dbReference>
<dbReference type="InterPro" id="IPR050087">
    <property type="entry name" value="AON_synthase_class-II"/>
</dbReference>
<dbReference type="InterPro" id="IPR004723">
    <property type="entry name" value="AONS_Archaea/Proteobacteria"/>
</dbReference>
<dbReference type="InterPro" id="IPR022834">
    <property type="entry name" value="AONS_Proteobacteria"/>
</dbReference>
<dbReference type="InterPro" id="IPR015424">
    <property type="entry name" value="PyrdxlP-dep_Trfase"/>
</dbReference>
<dbReference type="InterPro" id="IPR015421">
    <property type="entry name" value="PyrdxlP-dep_Trfase_major"/>
</dbReference>
<dbReference type="InterPro" id="IPR015422">
    <property type="entry name" value="PyrdxlP-dep_Trfase_small"/>
</dbReference>
<dbReference type="NCBIfam" id="TIGR00858">
    <property type="entry name" value="bioF"/>
    <property type="match status" value="1"/>
</dbReference>
<dbReference type="PANTHER" id="PTHR13693:SF100">
    <property type="entry name" value="8-AMINO-7-OXONONANOATE SYNTHASE"/>
    <property type="match status" value="1"/>
</dbReference>
<dbReference type="PANTHER" id="PTHR13693">
    <property type="entry name" value="CLASS II AMINOTRANSFERASE/8-AMINO-7-OXONONANOATE SYNTHASE"/>
    <property type="match status" value="1"/>
</dbReference>
<dbReference type="Pfam" id="PF00155">
    <property type="entry name" value="Aminotran_1_2"/>
    <property type="match status" value="1"/>
</dbReference>
<dbReference type="SUPFAM" id="SSF53383">
    <property type="entry name" value="PLP-dependent transferases"/>
    <property type="match status" value="1"/>
</dbReference>
<dbReference type="PROSITE" id="PS00599">
    <property type="entry name" value="AA_TRANSFER_CLASS_2"/>
    <property type="match status" value="1"/>
</dbReference>